<accession>B5BBK4</accession>
<comment type="function">
    <text evidence="1">Catalyzes the formation of methylglyoxal from dihydroxyacetone phosphate.</text>
</comment>
<comment type="catalytic activity">
    <reaction evidence="1">
        <text>dihydroxyacetone phosphate = methylglyoxal + phosphate</text>
        <dbReference type="Rhea" id="RHEA:17937"/>
        <dbReference type="ChEBI" id="CHEBI:17158"/>
        <dbReference type="ChEBI" id="CHEBI:43474"/>
        <dbReference type="ChEBI" id="CHEBI:57642"/>
        <dbReference type="EC" id="4.2.3.3"/>
    </reaction>
</comment>
<comment type="similarity">
    <text evidence="1">Belongs to the methylglyoxal synthase family.</text>
</comment>
<name>MGSA_SALPK</name>
<feature type="chain" id="PRO_1000129008" description="Methylglyoxal synthase">
    <location>
        <begin position="1"/>
        <end position="152"/>
    </location>
</feature>
<feature type="domain" description="MGS-like" evidence="1">
    <location>
        <begin position="6"/>
        <end position="152"/>
    </location>
</feature>
<feature type="active site" description="Proton donor/acceptor" evidence="1">
    <location>
        <position position="71"/>
    </location>
</feature>
<feature type="binding site" evidence="1">
    <location>
        <position position="19"/>
    </location>
    <ligand>
        <name>substrate</name>
    </ligand>
</feature>
<feature type="binding site" evidence="1">
    <location>
        <position position="23"/>
    </location>
    <ligand>
        <name>substrate</name>
    </ligand>
</feature>
<feature type="binding site" evidence="1">
    <location>
        <begin position="45"/>
        <end position="48"/>
    </location>
    <ligand>
        <name>substrate</name>
    </ligand>
</feature>
<feature type="binding site" evidence="1">
    <location>
        <begin position="65"/>
        <end position="66"/>
    </location>
    <ligand>
        <name>substrate</name>
    </ligand>
</feature>
<feature type="binding site" evidence="1">
    <location>
        <position position="98"/>
    </location>
    <ligand>
        <name>substrate</name>
    </ligand>
</feature>
<evidence type="ECO:0000255" key="1">
    <source>
        <dbReference type="HAMAP-Rule" id="MF_00549"/>
    </source>
</evidence>
<organism>
    <name type="scientific">Salmonella paratyphi A (strain AKU_12601)</name>
    <dbReference type="NCBI Taxonomy" id="554290"/>
    <lineage>
        <taxon>Bacteria</taxon>
        <taxon>Pseudomonadati</taxon>
        <taxon>Pseudomonadota</taxon>
        <taxon>Gammaproteobacteria</taxon>
        <taxon>Enterobacterales</taxon>
        <taxon>Enterobacteriaceae</taxon>
        <taxon>Salmonella</taxon>
    </lineage>
</organism>
<keyword id="KW-0456">Lyase</keyword>
<reference key="1">
    <citation type="journal article" date="2009" name="BMC Genomics">
        <title>Pseudogene accumulation in the evolutionary histories of Salmonella enterica serovars Paratyphi A and Typhi.</title>
        <authorList>
            <person name="Holt K.E."/>
            <person name="Thomson N.R."/>
            <person name="Wain J."/>
            <person name="Langridge G.C."/>
            <person name="Hasan R."/>
            <person name="Bhutta Z.A."/>
            <person name="Quail M.A."/>
            <person name="Norbertczak H."/>
            <person name="Walker D."/>
            <person name="Simmonds M."/>
            <person name="White B."/>
            <person name="Bason N."/>
            <person name="Mungall K."/>
            <person name="Dougan G."/>
            <person name="Parkhill J."/>
        </authorList>
    </citation>
    <scope>NUCLEOTIDE SEQUENCE [LARGE SCALE GENOMIC DNA]</scope>
    <source>
        <strain>AKU_12601</strain>
    </source>
</reference>
<dbReference type="EC" id="4.2.3.3" evidence="1"/>
<dbReference type="EMBL" id="FM200053">
    <property type="protein sequence ID" value="CAR59839.1"/>
    <property type="molecule type" value="Genomic_DNA"/>
</dbReference>
<dbReference type="RefSeq" id="WP_000424187.1">
    <property type="nucleotide sequence ID" value="NC_011147.1"/>
</dbReference>
<dbReference type="SMR" id="B5BBK4"/>
<dbReference type="KEGG" id="sek:SSPA1647"/>
<dbReference type="HOGENOM" id="CLU_120420_0_1_6"/>
<dbReference type="Proteomes" id="UP000001869">
    <property type="component" value="Chromosome"/>
</dbReference>
<dbReference type="GO" id="GO:0005829">
    <property type="term" value="C:cytosol"/>
    <property type="evidence" value="ECO:0007669"/>
    <property type="project" value="TreeGrafter"/>
</dbReference>
<dbReference type="GO" id="GO:0008929">
    <property type="term" value="F:methylglyoxal synthase activity"/>
    <property type="evidence" value="ECO:0007669"/>
    <property type="project" value="UniProtKB-UniRule"/>
</dbReference>
<dbReference type="GO" id="GO:0019242">
    <property type="term" value="P:methylglyoxal biosynthetic process"/>
    <property type="evidence" value="ECO:0007669"/>
    <property type="project" value="UniProtKB-UniRule"/>
</dbReference>
<dbReference type="CDD" id="cd01422">
    <property type="entry name" value="MGS"/>
    <property type="match status" value="1"/>
</dbReference>
<dbReference type="FunFam" id="3.40.50.1380:FF:000002">
    <property type="entry name" value="Methylglyoxal synthase"/>
    <property type="match status" value="1"/>
</dbReference>
<dbReference type="Gene3D" id="3.40.50.1380">
    <property type="entry name" value="Methylglyoxal synthase-like domain"/>
    <property type="match status" value="1"/>
</dbReference>
<dbReference type="HAMAP" id="MF_00549">
    <property type="entry name" value="Methylglyoxal_synth"/>
    <property type="match status" value="1"/>
</dbReference>
<dbReference type="InterPro" id="IPR004363">
    <property type="entry name" value="Methylgl_synth"/>
</dbReference>
<dbReference type="InterPro" id="IPR018148">
    <property type="entry name" value="Methylglyoxal_synth_AS"/>
</dbReference>
<dbReference type="InterPro" id="IPR011607">
    <property type="entry name" value="MGS-like_dom"/>
</dbReference>
<dbReference type="InterPro" id="IPR036914">
    <property type="entry name" value="MGS-like_dom_sf"/>
</dbReference>
<dbReference type="NCBIfam" id="TIGR00160">
    <property type="entry name" value="MGSA"/>
    <property type="match status" value="1"/>
</dbReference>
<dbReference type="NCBIfam" id="NF003559">
    <property type="entry name" value="PRK05234.1"/>
    <property type="match status" value="1"/>
</dbReference>
<dbReference type="PANTHER" id="PTHR30492">
    <property type="entry name" value="METHYLGLYOXAL SYNTHASE"/>
    <property type="match status" value="1"/>
</dbReference>
<dbReference type="PANTHER" id="PTHR30492:SF0">
    <property type="entry name" value="METHYLGLYOXAL SYNTHASE"/>
    <property type="match status" value="1"/>
</dbReference>
<dbReference type="Pfam" id="PF02142">
    <property type="entry name" value="MGS"/>
    <property type="match status" value="1"/>
</dbReference>
<dbReference type="PIRSF" id="PIRSF006614">
    <property type="entry name" value="Methylglyox_syn"/>
    <property type="match status" value="1"/>
</dbReference>
<dbReference type="SMART" id="SM00851">
    <property type="entry name" value="MGS"/>
    <property type="match status" value="1"/>
</dbReference>
<dbReference type="SUPFAM" id="SSF52335">
    <property type="entry name" value="Methylglyoxal synthase-like"/>
    <property type="match status" value="1"/>
</dbReference>
<dbReference type="PROSITE" id="PS01335">
    <property type="entry name" value="METHYLGLYOXAL_SYNTH"/>
    <property type="match status" value="1"/>
</dbReference>
<dbReference type="PROSITE" id="PS51855">
    <property type="entry name" value="MGS"/>
    <property type="match status" value="1"/>
</dbReference>
<gene>
    <name evidence="1" type="primary">mgsA</name>
    <name type="ordered locus">SSPA1647</name>
</gene>
<sequence>MELTTRTLPTRKHIALVAHDHCKQMLMNWVERHQPLLEKHVLYATGTTGNLIQRATGMDVNAMLSGPMGGDQQVGALISEGKIDVLIFFWDPLNAVPHDPDVKALLRLATVWNIPVATNVSTADFIIQSPHFNDAVDILIPDYARYLAERLK</sequence>
<protein>
    <recommendedName>
        <fullName evidence="1">Methylglyoxal synthase</fullName>
        <shortName evidence="1">MGS</shortName>
        <ecNumber evidence="1">4.2.3.3</ecNumber>
    </recommendedName>
</protein>
<proteinExistence type="inferred from homology"/>